<gene>
    <name evidence="1" type="primary">znuC</name>
    <name type="ordered locus">Atu1520</name>
    <name type="ORF">AGR_C_2804</name>
</gene>
<protein>
    <recommendedName>
        <fullName evidence="1">Zinc import ATP-binding protein ZnuC</fullName>
        <ecNumber evidence="1">7.2.2.20</ecNumber>
    </recommendedName>
</protein>
<name>ZNUC_AGRFC</name>
<proteinExistence type="inferred from homology"/>
<reference key="1">
    <citation type="journal article" date="2001" name="Science">
        <title>The genome of the natural genetic engineer Agrobacterium tumefaciens C58.</title>
        <authorList>
            <person name="Wood D.W."/>
            <person name="Setubal J.C."/>
            <person name="Kaul R."/>
            <person name="Monks D.E."/>
            <person name="Kitajima J.P."/>
            <person name="Okura V.K."/>
            <person name="Zhou Y."/>
            <person name="Chen L."/>
            <person name="Wood G.E."/>
            <person name="Almeida N.F. Jr."/>
            <person name="Woo L."/>
            <person name="Chen Y."/>
            <person name="Paulsen I.T."/>
            <person name="Eisen J.A."/>
            <person name="Karp P.D."/>
            <person name="Bovee D. Sr."/>
            <person name="Chapman P."/>
            <person name="Clendenning J."/>
            <person name="Deatherage G."/>
            <person name="Gillet W."/>
            <person name="Grant C."/>
            <person name="Kutyavin T."/>
            <person name="Levy R."/>
            <person name="Li M.-J."/>
            <person name="McClelland E."/>
            <person name="Palmieri A."/>
            <person name="Raymond C."/>
            <person name="Rouse G."/>
            <person name="Saenphimmachak C."/>
            <person name="Wu Z."/>
            <person name="Romero P."/>
            <person name="Gordon D."/>
            <person name="Zhang S."/>
            <person name="Yoo H."/>
            <person name="Tao Y."/>
            <person name="Biddle P."/>
            <person name="Jung M."/>
            <person name="Krespan W."/>
            <person name="Perry M."/>
            <person name="Gordon-Kamm B."/>
            <person name="Liao L."/>
            <person name="Kim S."/>
            <person name="Hendrick C."/>
            <person name="Zhao Z.-Y."/>
            <person name="Dolan M."/>
            <person name="Chumley F."/>
            <person name="Tingey S.V."/>
            <person name="Tomb J.-F."/>
            <person name="Gordon M.P."/>
            <person name="Olson M.V."/>
            <person name="Nester E.W."/>
        </authorList>
    </citation>
    <scope>NUCLEOTIDE SEQUENCE [LARGE SCALE GENOMIC DNA]</scope>
    <source>
        <strain>C58 / ATCC 33970</strain>
    </source>
</reference>
<reference key="2">
    <citation type="journal article" date="2001" name="Science">
        <title>Genome sequence of the plant pathogen and biotechnology agent Agrobacterium tumefaciens C58.</title>
        <authorList>
            <person name="Goodner B."/>
            <person name="Hinkle G."/>
            <person name="Gattung S."/>
            <person name="Miller N."/>
            <person name="Blanchard M."/>
            <person name="Qurollo B."/>
            <person name="Goldman B.S."/>
            <person name="Cao Y."/>
            <person name="Askenazi M."/>
            <person name="Halling C."/>
            <person name="Mullin L."/>
            <person name="Houmiel K."/>
            <person name="Gordon J."/>
            <person name="Vaudin M."/>
            <person name="Iartchouk O."/>
            <person name="Epp A."/>
            <person name="Liu F."/>
            <person name="Wollam C."/>
            <person name="Allinger M."/>
            <person name="Doughty D."/>
            <person name="Scott C."/>
            <person name="Lappas C."/>
            <person name="Markelz B."/>
            <person name="Flanagan C."/>
            <person name="Crowell C."/>
            <person name="Gurson J."/>
            <person name="Lomo C."/>
            <person name="Sear C."/>
            <person name="Strub G."/>
            <person name="Cielo C."/>
            <person name="Slater S."/>
        </authorList>
    </citation>
    <scope>NUCLEOTIDE SEQUENCE [LARGE SCALE GENOMIC DNA]</scope>
    <source>
        <strain>C58 / ATCC 33970</strain>
    </source>
</reference>
<sequence length="299" mass="32084">MLHSAHKGNEILVSLANAGVQRNGRWLVRGVEFSVSKGEIVTLIGPNGSGKSTSAKMAIGVAKPSEGKVSRKAGLRVGYVPQKLSVDWTMPLSVRRLMTLTGPLPAREIDAALNATGIAHLANAEVQHLSGGEFQRALLARAIARKPDLLVLDEPVQGVDFSGEIALYDLIKNIRNSNDCGILLISHDLHVVMAETDTVICLNGHVCCRGTPQAVSQSPEYMRLFGGTAAKALAVYSHHHDHTHLPDGRVQHADGTVTDHCHPEDGHHHDEDGECGCGHDHGEHGDHAPDGLRQGERHV</sequence>
<organism>
    <name type="scientific">Agrobacterium fabrum (strain C58 / ATCC 33970)</name>
    <name type="common">Agrobacterium tumefaciens (strain C58)</name>
    <dbReference type="NCBI Taxonomy" id="176299"/>
    <lineage>
        <taxon>Bacteria</taxon>
        <taxon>Pseudomonadati</taxon>
        <taxon>Pseudomonadota</taxon>
        <taxon>Alphaproteobacteria</taxon>
        <taxon>Hyphomicrobiales</taxon>
        <taxon>Rhizobiaceae</taxon>
        <taxon>Rhizobium/Agrobacterium group</taxon>
        <taxon>Agrobacterium</taxon>
        <taxon>Agrobacterium tumefaciens complex</taxon>
    </lineage>
</organism>
<dbReference type="EC" id="7.2.2.20" evidence="1"/>
<dbReference type="EMBL" id="AE007869">
    <property type="protein sequence ID" value="AAK87311.1"/>
    <property type="molecule type" value="Genomic_DNA"/>
</dbReference>
<dbReference type="PIR" id="AG2763">
    <property type="entry name" value="AG2763"/>
</dbReference>
<dbReference type="PIR" id="F97544">
    <property type="entry name" value="F97544"/>
</dbReference>
<dbReference type="RefSeq" id="NP_354526.1">
    <property type="nucleotide sequence ID" value="NC_003062.2"/>
</dbReference>
<dbReference type="RefSeq" id="WP_010971687.1">
    <property type="nucleotide sequence ID" value="NC_003062.2"/>
</dbReference>
<dbReference type="SMR" id="Q8UF79"/>
<dbReference type="STRING" id="176299.Atu1520"/>
<dbReference type="EnsemblBacteria" id="AAK87311">
    <property type="protein sequence ID" value="AAK87311"/>
    <property type="gene ID" value="Atu1520"/>
</dbReference>
<dbReference type="GeneID" id="1133558"/>
<dbReference type="KEGG" id="atu:Atu1520"/>
<dbReference type="PATRIC" id="fig|176299.10.peg.1546"/>
<dbReference type="eggNOG" id="COG1121">
    <property type="taxonomic scope" value="Bacteria"/>
</dbReference>
<dbReference type="HOGENOM" id="CLU_000604_1_11_5"/>
<dbReference type="OrthoDB" id="9780942at2"/>
<dbReference type="PhylomeDB" id="Q8UF79"/>
<dbReference type="BioCyc" id="AGRO:ATU1520-MONOMER"/>
<dbReference type="Proteomes" id="UP000000813">
    <property type="component" value="Chromosome circular"/>
</dbReference>
<dbReference type="GO" id="GO:0005886">
    <property type="term" value="C:plasma membrane"/>
    <property type="evidence" value="ECO:0007669"/>
    <property type="project" value="UniProtKB-SubCell"/>
</dbReference>
<dbReference type="GO" id="GO:0015633">
    <property type="term" value="F:ABC-type zinc transporter activity"/>
    <property type="evidence" value="ECO:0007669"/>
    <property type="project" value="UniProtKB-EC"/>
</dbReference>
<dbReference type="GO" id="GO:0005524">
    <property type="term" value="F:ATP binding"/>
    <property type="evidence" value="ECO:0007669"/>
    <property type="project" value="UniProtKB-KW"/>
</dbReference>
<dbReference type="GO" id="GO:0016887">
    <property type="term" value="F:ATP hydrolysis activity"/>
    <property type="evidence" value="ECO:0007669"/>
    <property type="project" value="InterPro"/>
</dbReference>
<dbReference type="GO" id="GO:0010043">
    <property type="term" value="P:response to zinc ion"/>
    <property type="evidence" value="ECO:0007669"/>
    <property type="project" value="TreeGrafter"/>
</dbReference>
<dbReference type="Gene3D" id="3.40.50.300">
    <property type="entry name" value="P-loop containing nucleotide triphosphate hydrolases"/>
    <property type="match status" value="1"/>
</dbReference>
<dbReference type="InterPro" id="IPR003593">
    <property type="entry name" value="AAA+_ATPase"/>
</dbReference>
<dbReference type="InterPro" id="IPR003439">
    <property type="entry name" value="ABC_transporter-like_ATP-bd"/>
</dbReference>
<dbReference type="InterPro" id="IPR017871">
    <property type="entry name" value="ABC_transporter-like_CS"/>
</dbReference>
<dbReference type="InterPro" id="IPR050153">
    <property type="entry name" value="Metal_Ion_Import_ABC"/>
</dbReference>
<dbReference type="InterPro" id="IPR027417">
    <property type="entry name" value="P-loop_NTPase"/>
</dbReference>
<dbReference type="PANTHER" id="PTHR42734">
    <property type="entry name" value="METAL TRANSPORT SYSTEM ATP-BINDING PROTEIN TM_0124-RELATED"/>
    <property type="match status" value="1"/>
</dbReference>
<dbReference type="PANTHER" id="PTHR42734:SF9">
    <property type="entry name" value="ZINC IMPORT ATP-BINDING PROTEIN ZNUC"/>
    <property type="match status" value="1"/>
</dbReference>
<dbReference type="Pfam" id="PF00005">
    <property type="entry name" value="ABC_tran"/>
    <property type="match status" value="1"/>
</dbReference>
<dbReference type="SMART" id="SM00382">
    <property type="entry name" value="AAA"/>
    <property type="match status" value="1"/>
</dbReference>
<dbReference type="SUPFAM" id="SSF52540">
    <property type="entry name" value="P-loop containing nucleoside triphosphate hydrolases"/>
    <property type="match status" value="1"/>
</dbReference>
<dbReference type="PROSITE" id="PS00211">
    <property type="entry name" value="ABC_TRANSPORTER_1"/>
    <property type="match status" value="1"/>
</dbReference>
<dbReference type="PROSITE" id="PS50893">
    <property type="entry name" value="ABC_TRANSPORTER_2"/>
    <property type="match status" value="1"/>
</dbReference>
<dbReference type="PROSITE" id="PS51298">
    <property type="entry name" value="ZNUC"/>
    <property type="match status" value="1"/>
</dbReference>
<accession>Q8UF79</accession>
<accession>Q7CZ26</accession>
<evidence type="ECO:0000255" key="1">
    <source>
        <dbReference type="HAMAP-Rule" id="MF_01725"/>
    </source>
</evidence>
<keyword id="KW-0067">ATP-binding</keyword>
<keyword id="KW-0997">Cell inner membrane</keyword>
<keyword id="KW-1003">Cell membrane</keyword>
<keyword id="KW-0406">Ion transport</keyword>
<keyword id="KW-0472">Membrane</keyword>
<keyword id="KW-0547">Nucleotide-binding</keyword>
<keyword id="KW-1185">Reference proteome</keyword>
<keyword id="KW-1278">Translocase</keyword>
<keyword id="KW-0813">Transport</keyword>
<keyword id="KW-0862">Zinc</keyword>
<keyword id="KW-0864">Zinc transport</keyword>
<comment type="function">
    <text evidence="1">Part of the ABC transporter complex ZnuABC involved in zinc import. Responsible for energy coupling to the transport system.</text>
</comment>
<comment type="catalytic activity">
    <reaction evidence="1">
        <text>Zn(2+)(out) + ATP(in) + H2O(in) = Zn(2+)(in) + ADP(in) + phosphate(in) + H(+)(in)</text>
        <dbReference type="Rhea" id="RHEA:29795"/>
        <dbReference type="ChEBI" id="CHEBI:15377"/>
        <dbReference type="ChEBI" id="CHEBI:15378"/>
        <dbReference type="ChEBI" id="CHEBI:29105"/>
        <dbReference type="ChEBI" id="CHEBI:30616"/>
        <dbReference type="ChEBI" id="CHEBI:43474"/>
        <dbReference type="ChEBI" id="CHEBI:456216"/>
        <dbReference type="EC" id="7.2.2.20"/>
    </reaction>
</comment>
<comment type="subunit">
    <text evidence="1">The complex is composed of two ATP-binding proteins (ZnuC), two transmembrane proteins (ZnuB) and a solute-binding protein (ZnuA).</text>
</comment>
<comment type="subcellular location">
    <subcellularLocation>
        <location evidence="1">Cell inner membrane</location>
        <topology evidence="1">Peripheral membrane protein</topology>
    </subcellularLocation>
</comment>
<comment type="similarity">
    <text evidence="1">Belongs to the ABC transporter superfamily. Zinc importer (TC 3.A.1.15.5) family.</text>
</comment>
<feature type="chain" id="PRO_0000281490" description="Zinc import ATP-binding protein ZnuC">
    <location>
        <begin position="1"/>
        <end position="299"/>
    </location>
</feature>
<feature type="domain" description="ABC transporter" evidence="1">
    <location>
        <begin position="13"/>
        <end position="228"/>
    </location>
</feature>
<feature type="binding site" evidence="1">
    <location>
        <begin position="45"/>
        <end position="52"/>
    </location>
    <ligand>
        <name>ATP</name>
        <dbReference type="ChEBI" id="CHEBI:30616"/>
    </ligand>
</feature>